<comment type="function">
    <text evidence="3 4 6">Mitochondrial protein involved in the maturation of mitochondrial [4Fe-4S]-proteins in the late stage of the iron-sulfur cluster assembly pathway (PubMed:22323289, PubMed:23462291). Operates in cooperation with ISCA2 in the maturation of [4Fe-4S] proteins (PubMed:30269484).</text>
</comment>
<comment type="function">
    <text evidence="4">Involved in the maturation of mitochondrial 2Fe-2S proteins in the late stage of the iron-sulfur cluster assembly pathway.</text>
</comment>
<comment type="subunit">
    <text evidence="6 7">Monomer (PubMed:31831856). Heterotetramer; forms a dimer of dimers with ISCA2 (PubMed:31831856). Interacts with [2Fe-2S]-ISCA2 forming the heterodimer [2Fe- 2S]-ISCA2-IBA57 complex; [2Fe-2S] cluster binding is absolutely required to promote the complex formation (PubMed:30269484).</text>
</comment>
<comment type="interaction">
    <interactant intactId="EBI-10714899">
        <id>Q5T440</id>
    </interactant>
    <interactant intactId="EBI-10258659">
        <id>Q86U28</id>
        <label>ISCA2</label>
    </interactant>
    <organismsDiffer>false</organismsDiffer>
    <experiments>6</experiments>
</comment>
<comment type="subcellular location">
    <subcellularLocation>
        <location evidence="3 4">Mitochondrion</location>
    </subcellularLocation>
</comment>
<comment type="tissue specificity">
    <text evidence="4">Expressed in skin fibroblasts and skeletal muscle (at protein level).</text>
</comment>
<comment type="disease" evidence="4">
    <disease id="DI-03800">
        <name>Multiple mitochondrial dysfunctions syndrome 3</name>
        <acronym>MMDS3</acronym>
        <description>A severe disorder of systemic energy metabolism, resulting in weakness, respiratory failure, lack of neurologic development, lactic acidosis, hyperglycinemia and early death. Some patients show failure to thrive, pulmonary hypertension, hypotonia and irritability. Biochemical features include severe combined deficiency of the 2-oxoacid dehydrogenases, defective lipoic acid synthesis and reduction in activity of mitochondrial respiratory chain complexes.</description>
        <dbReference type="MIM" id="615330"/>
    </disease>
    <text>The disease is caused by variants affecting the gene represented in this entry.</text>
</comment>
<comment type="disease" evidence="5">
    <disease id="DI-04475">
        <name>Spastic paraplegia 74, autosomal recessive</name>
        <acronym>SPG74</acronym>
        <description>A form of spastic paraplegia, a neurodegenerative disorder characterized by a slow, gradual, progressive weakness and spasticity of the lower limbs. Rate of progression and the severity of symptoms are quite variable. Initial symptoms may include difficulty with balance, weakness and stiffness in the legs, muscle spasms, and dragging the toes when walking. In some forms of the disorder, bladder symptoms (such as incontinence) may appear, or the weakness and stiffness may spread to other parts of the body. SPG74 is characterized by a combination of spastic paraplegia, optic atrophy, and peripheral neuropathy with childhood-onset and slow progression into late adulthood.</description>
        <dbReference type="MIM" id="616451"/>
    </disease>
    <text>The disease is caused by variants affecting the gene represented in this entry.</text>
</comment>
<comment type="similarity">
    <text evidence="8">Belongs to the GcvT family. CAF17/IBA57 subfamily.</text>
</comment>
<proteinExistence type="evidence at protein level"/>
<evidence type="ECO:0000250" key="1">
    <source>
        <dbReference type="UniProtKB" id="Q8CAK1"/>
    </source>
</evidence>
<evidence type="ECO:0000255" key="2"/>
<evidence type="ECO:0000269" key="3">
    <source>
    </source>
</evidence>
<evidence type="ECO:0000269" key="4">
    <source>
    </source>
</evidence>
<evidence type="ECO:0000269" key="5">
    <source>
    </source>
</evidence>
<evidence type="ECO:0000269" key="6">
    <source>
    </source>
</evidence>
<evidence type="ECO:0000269" key="7">
    <source>
    </source>
</evidence>
<evidence type="ECO:0000305" key="8"/>
<evidence type="ECO:0007744" key="9">
    <source>
        <dbReference type="PDB" id="6GEU"/>
    </source>
</evidence>
<evidence type="ECO:0007744" key="10">
    <source>
        <dbReference type="PDB" id="6QE3"/>
    </source>
</evidence>
<evidence type="ECO:0007744" key="11">
    <source>
        <dbReference type="PDB" id="6QE4"/>
    </source>
</evidence>
<evidence type="ECO:0007829" key="12">
    <source>
        <dbReference type="PDB" id="6GEU"/>
    </source>
</evidence>
<evidence type="ECO:0007829" key="13">
    <source>
        <dbReference type="PDB" id="6QE3"/>
    </source>
</evidence>
<evidence type="ECO:0007829" key="14">
    <source>
        <dbReference type="PDB" id="6QE4"/>
    </source>
</evidence>
<sequence>MATAALLRGATPGRGGPVWRWRLRAAPRCRLAHSSCSPGGDPTAGAAWACFRLDGRTLLRVRGPDAAPFLLGLLTNELPLPSPAAAGAPPAARAGYAHFLNVQGRTLYDVILYGLQEHSEVSGFLLECDSSVQGALQKHLALYRIRRKVTVEPHPELRVWAVLPSSPEACGAASLQERAGAAAILIRDPRTARMGWRLLTQDEGPALVPGGRLGDLWDYHQHRYLQGVPEGVRDLPPGVALPLESNLAFMNGVSFTKGCYIGQELTARTHHMGVIRKRLFPVRFLDPLPTSGITPGATVLTASGQTVGKFRAGQGNVGLALLWSEKIKGPLHIRASEGAQVALAASVPDWWPTVSK</sequence>
<reference key="1">
    <citation type="journal article" date="2006" name="Nature">
        <title>The DNA sequence and biological annotation of human chromosome 1.</title>
        <authorList>
            <person name="Gregory S.G."/>
            <person name="Barlow K.F."/>
            <person name="McLay K.E."/>
            <person name="Kaul R."/>
            <person name="Swarbreck D."/>
            <person name="Dunham A."/>
            <person name="Scott C.E."/>
            <person name="Howe K.L."/>
            <person name="Woodfine K."/>
            <person name="Spencer C.C.A."/>
            <person name="Jones M.C."/>
            <person name="Gillson C."/>
            <person name="Searle S."/>
            <person name="Zhou Y."/>
            <person name="Kokocinski F."/>
            <person name="McDonald L."/>
            <person name="Evans R."/>
            <person name="Phillips K."/>
            <person name="Atkinson A."/>
            <person name="Cooper R."/>
            <person name="Jones C."/>
            <person name="Hall R.E."/>
            <person name="Andrews T.D."/>
            <person name="Lloyd C."/>
            <person name="Ainscough R."/>
            <person name="Almeida J.P."/>
            <person name="Ambrose K.D."/>
            <person name="Anderson F."/>
            <person name="Andrew R.W."/>
            <person name="Ashwell R.I.S."/>
            <person name="Aubin K."/>
            <person name="Babbage A.K."/>
            <person name="Bagguley C.L."/>
            <person name="Bailey J."/>
            <person name="Beasley H."/>
            <person name="Bethel G."/>
            <person name="Bird C.P."/>
            <person name="Bray-Allen S."/>
            <person name="Brown J.Y."/>
            <person name="Brown A.J."/>
            <person name="Buckley D."/>
            <person name="Burton J."/>
            <person name="Bye J."/>
            <person name="Carder C."/>
            <person name="Chapman J.C."/>
            <person name="Clark S.Y."/>
            <person name="Clarke G."/>
            <person name="Clee C."/>
            <person name="Cobley V."/>
            <person name="Collier R.E."/>
            <person name="Corby N."/>
            <person name="Coville G.J."/>
            <person name="Davies J."/>
            <person name="Deadman R."/>
            <person name="Dunn M."/>
            <person name="Earthrowl M."/>
            <person name="Ellington A.G."/>
            <person name="Errington H."/>
            <person name="Frankish A."/>
            <person name="Frankland J."/>
            <person name="French L."/>
            <person name="Garner P."/>
            <person name="Garnett J."/>
            <person name="Gay L."/>
            <person name="Ghori M.R.J."/>
            <person name="Gibson R."/>
            <person name="Gilby L.M."/>
            <person name="Gillett W."/>
            <person name="Glithero R.J."/>
            <person name="Grafham D.V."/>
            <person name="Griffiths C."/>
            <person name="Griffiths-Jones S."/>
            <person name="Grocock R."/>
            <person name="Hammond S."/>
            <person name="Harrison E.S.I."/>
            <person name="Hart E."/>
            <person name="Haugen E."/>
            <person name="Heath P.D."/>
            <person name="Holmes S."/>
            <person name="Holt K."/>
            <person name="Howden P.J."/>
            <person name="Hunt A.R."/>
            <person name="Hunt S.E."/>
            <person name="Hunter G."/>
            <person name="Isherwood J."/>
            <person name="James R."/>
            <person name="Johnson C."/>
            <person name="Johnson D."/>
            <person name="Joy A."/>
            <person name="Kay M."/>
            <person name="Kershaw J.K."/>
            <person name="Kibukawa M."/>
            <person name="Kimberley A.M."/>
            <person name="King A."/>
            <person name="Knights A.J."/>
            <person name="Lad H."/>
            <person name="Laird G."/>
            <person name="Lawlor S."/>
            <person name="Leongamornlert D.A."/>
            <person name="Lloyd D.M."/>
            <person name="Loveland J."/>
            <person name="Lovell J."/>
            <person name="Lush M.J."/>
            <person name="Lyne R."/>
            <person name="Martin S."/>
            <person name="Mashreghi-Mohammadi M."/>
            <person name="Matthews L."/>
            <person name="Matthews N.S.W."/>
            <person name="McLaren S."/>
            <person name="Milne S."/>
            <person name="Mistry S."/>
            <person name="Moore M.J.F."/>
            <person name="Nickerson T."/>
            <person name="O'Dell C.N."/>
            <person name="Oliver K."/>
            <person name="Palmeiri A."/>
            <person name="Palmer S.A."/>
            <person name="Parker A."/>
            <person name="Patel D."/>
            <person name="Pearce A.V."/>
            <person name="Peck A.I."/>
            <person name="Pelan S."/>
            <person name="Phelps K."/>
            <person name="Phillimore B.J."/>
            <person name="Plumb R."/>
            <person name="Rajan J."/>
            <person name="Raymond C."/>
            <person name="Rouse G."/>
            <person name="Saenphimmachak C."/>
            <person name="Sehra H.K."/>
            <person name="Sheridan E."/>
            <person name="Shownkeen R."/>
            <person name="Sims S."/>
            <person name="Skuce C.D."/>
            <person name="Smith M."/>
            <person name="Steward C."/>
            <person name="Subramanian S."/>
            <person name="Sycamore N."/>
            <person name="Tracey A."/>
            <person name="Tromans A."/>
            <person name="Van Helmond Z."/>
            <person name="Wall M."/>
            <person name="Wallis J.M."/>
            <person name="White S."/>
            <person name="Whitehead S.L."/>
            <person name="Wilkinson J.E."/>
            <person name="Willey D.L."/>
            <person name="Williams H."/>
            <person name="Wilming L."/>
            <person name="Wray P.W."/>
            <person name="Wu Z."/>
            <person name="Coulson A."/>
            <person name="Vaudin M."/>
            <person name="Sulston J.E."/>
            <person name="Durbin R.M."/>
            <person name="Hubbard T."/>
            <person name="Wooster R."/>
            <person name="Dunham I."/>
            <person name="Carter N.P."/>
            <person name="McVean G."/>
            <person name="Ross M.T."/>
            <person name="Harrow J."/>
            <person name="Olson M.V."/>
            <person name="Beck S."/>
            <person name="Rogers J."/>
            <person name="Bentley D.R."/>
        </authorList>
    </citation>
    <scope>NUCLEOTIDE SEQUENCE [LARGE SCALE GENOMIC DNA]</scope>
</reference>
<reference key="2">
    <citation type="journal article" date="2011" name="BMC Syst. Biol.">
        <title>Initial characterization of the human central proteome.</title>
        <authorList>
            <person name="Burkard T.R."/>
            <person name="Planyavsky M."/>
            <person name="Kaupe I."/>
            <person name="Breitwieser F.P."/>
            <person name="Buerckstuemmer T."/>
            <person name="Bennett K.L."/>
            <person name="Superti-Furga G."/>
            <person name="Colinge J."/>
        </authorList>
    </citation>
    <scope>IDENTIFICATION BY MASS SPECTROMETRY [LARGE SCALE ANALYSIS]</scope>
</reference>
<reference key="3">
    <citation type="journal article" date="2012" name="Mol. Biol. Cell">
        <title>The human mitochondrial ISCA1, ISCA2, and IBA57 proteins are required for [4Fe-4S] protein maturation.</title>
        <authorList>
            <person name="Sheftel A.D."/>
            <person name="Wilbrecht C."/>
            <person name="Stehling O."/>
            <person name="Niggemeyer B."/>
            <person name="Elsasser H.P."/>
            <person name="Muhlenhoff U."/>
            <person name="Lill R."/>
        </authorList>
    </citation>
    <scope>SUBCELLULAR LOCATION</scope>
    <scope>FUNCTION</scope>
</reference>
<reference key="4">
    <citation type="journal article" date="2014" name="J. Proteomics">
        <title>An enzyme assisted RP-RPLC approach for in-depth analysis of human liver phosphoproteome.</title>
        <authorList>
            <person name="Bian Y."/>
            <person name="Song C."/>
            <person name="Cheng K."/>
            <person name="Dong M."/>
            <person name="Wang F."/>
            <person name="Huang J."/>
            <person name="Sun D."/>
            <person name="Wang L."/>
            <person name="Ye M."/>
            <person name="Zou H."/>
        </authorList>
    </citation>
    <scope>IDENTIFICATION BY MASS SPECTROMETRY [LARGE SCALE ANALYSIS]</scope>
    <source>
        <tissue>Liver</tissue>
    </source>
</reference>
<reference key="5">
    <citation type="journal article" date="2015" name="Neurology">
        <title>Fe/S protein assembly gene IBA57 mutation causes hereditary spastic paraplegia.</title>
        <authorList>
            <person name="Lossos A."/>
            <person name="Stuempfig C."/>
            <person name="Stevanin G."/>
            <person name="Gaussen M."/>
            <person name="Zimmerman B.E."/>
            <person name="Mundwiller E."/>
            <person name="Asulin M."/>
            <person name="Chamma L."/>
            <person name="Sheffer R."/>
            <person name="Misk A."/>
            <person name="Dotan S."/>
            <person name="Gomori J.M."/>
            <person name="Ponger P."/>
            <person name="Brice A."/>
            <person name="Lerer I."/>
            <person name="Meiner V."/>
            <person name="Lill R."/>
        </authorList>
    </citation>
    <scope>INVOLVEMENT IN SPG74</scope>
</reference>
<reference key="6">
    <citation type="journal article" date="2015" name="Proteomics">
        <title>N-terminome analysis of the human mitochondrial proteome.</title>
        <authorList>
            <person name="Vaca Jacome A.S."/>
            <person name="Rabilloud T."/>
            <person name="Schaeffer-Reiss C."/>
            <person name="Rompais M."/>
            <person name="Ayoub D."/>
            <person name="Lane L."/>
            <person name="Bairoch A."/>
            <person name="Van Dorsselaer A."/>
            <person name="Carapito C."/>
        </authorList>
    </citation>
    <scope>IDENTIFICATION BY MASS SPECTROMETRY [LARGE SCALE ANALYSIS]</scope>
</reference>
<reference key="7">
    <citation type="journal article" date="2019" name="Sci. Rep.">
        <title>Structural properties of [2Fe-2S] ISCA2-IBA57: a complex of the mitochondrial iron-sulfur cluster assembly machinery.</title>
        <authorList>
            <person name="Nasta V."/>
            <person name="Da Vela S."/>
            <person name="Gourdoupis S."/>
            <person name="Ciofi-Baffoni S."/>
            <person name="Svergun D.I."/>
            <person name="Banci L."/>
        </authorList>
    </citation>
    <scope>SUBUNIT</scope>
    <scope>INTERACTION WITH ISCA2</scope>
    <scope>MUTAGENESIS OF ARG-146</scope>
</reference>
<reference key="8">
    <citation type="journal article" date="2013" name="Hum. Mol. Genet.">
        <title>Mutation of the iron-sulfur cluster assembly gene IBA57 causes severe myopathy and encephalopathy.</title>
        <authorList>
            <person name="Ajit Bolar N."/>
            <person name="Vanlander A.V."/>
            <person name="Wilbrecht C."/>
            <person name="Van der Aa N."/>
            <person name="Smet J."/>
            <person name="De Paepe B."/>
            <person name="Vandeweyer G."/>
            <person name="Kooy F."/>
            <person name="Eyskens F."/>
            <person name="De Latter E."/>
            <person name="Delanghe G."/>
            <person name="Govaert P."/>
            <person name="Leroy J.G."/>
            <person name="Loeys B."/>
            <person name="Lill R."/>
            <person name="Van Laer L."/>
            <person name="Van Coster R."/>
        </authorList>
    </citation>
    <scope>VARIANT MMDS3 PRO-314</scope>
    <scope>FUNCTION</scope>
    <scope>SUBCELLULAR LOCATION</scope>
    <scope>TISSUE SPECIFICITY</scope>
</reference>
<reference evidence="9" key="9">
    <citation type="journal article" date="2018" name="J. Am. Chem. Soc.">
        <title>IBA57 Recruits ISCA2 to Form a [2Fe-2S] Cluster-Mediated Complex.</title>
        <authorList>
            <person name="Gourdoupis S."/>
            <person name="Nasta V."/>
            <person name="Calderone V."/>
            <person name="Ciofi-Baffoni S."/>
            <person name="Banci L."/>
        </authorList>
    </citation>
    <scope>X-RAY CRYSTALLOGRAPHY (1.55 ANGSTROMS) OF 43-356</scope>
    <scope>INTERACTION WITH ISCA2</scope>
    <scope>SUBUNIT</scope>
    <scope>MUTAGENESIS OF CYS-259</scope>
    <scope>FUNCTION</scope>
</reference>
<reference evidence="10 11" key="10">
    <citation type="journal article" date="2019" name="Acta Crystallogr. D Struct. Biol.">
        <title>In-house high-energy-remote SAD phasing using the magic triangle: how to tackle the P1 low symmetry using multiple orientations of the same crystal of human IBA57 to increase the multiplicity.</title>
        <authorList>
            <person name="Gourdoupis S."/>
            <person name="Nasta V."/>
            <person name="Ciofi-Baffoni S."/>
            <person name="Banci L."/>
            <person name="Calderone V."/>
        </authorList>
    </citation>
    <scope>X-RAY CRYSTALLOGRAPHY (1.75 ANGSTROMS) OF 44-352</scope>
</reference>
<gene>
    <name type="primary">IBA57</name>
    <name type="synonym">C1orf69</name>
</gene>
<dbReference type="EMBL" id="AL359510">
    <property type="status" value="NOT_ANNOTATED_CDS"/>
    <property type="molecule type" value="Genomic_DNA"/>
</dbReference>
<dbReference type="CCDS" id="CCDS31046.1"/>
<dbReference type="RefSeq" id="NP_001010867.1">
    <property type="nucleotide sequence ID" value="NM_001010867.4"/>
</dbReference>
<dbReference type="PDB" id="6GEU">
    <property type="method" value="X-ray"/>
    <property type="resolution" value="1.55 A"/>
    <property type="chains" value="A=43-356"/>
</dbReference>
<dbReference type="PDB" id="6QE3">
    <property type="method" value="X-ray"/>
    <property type="resolution" value="1.75 A"/>
    <property type="chains" value="A=44-352"/>
</dbReference>
<dbReference type="PDB" id="6QE4">
    <property type="method" value="X-ray"/>
    <property type="resolution" value="2.30 A"/>
    <property type="chains" value="A=31-356"/>
</dbReference>
<dbReference type="PDBsum" id="6GEU"/>
<dbReference type="PDBsum" id="6QE3"/>
<dbReference type="PDBsum" id="6QE4"/>
<dbReference type="SASBDB" id="Q5T440"/>
<dbReference type="SMR" id="Q5T440"/>
<dbReference type="BioGRID" id="128310">
    <property type="interactions" value="94"/>
</dbReference>
<dbReference type="ComplexPortal" id="CPX-2503">
    <property type="entry name" value="ISCA2-IBA57 mitochondrial iron-sulfur protein assembly complex"/>
</dbReference>
<dbReference type="FunCoup" id="Q5T440">
    <property type="interactions" value="1031"/>
</dbReference>
<dbReference type="IntAct" id="Q5T440">
    <property type="interactions" value="27"/>
</dbReference>
<dbReference type="MINT" id="Q5T440"/>
<dbReference type="STRING" id="9606.ENSP00000355672"/>
<dbReference type="GlyGen" id="Q5T440">
    <property type="glycosylation" value="2 sites, 1 O-linked glycan (1 site)"/>
</dbReference>
<dbReference type="iPTMnet" id="Q5T440"/>
<dbReference type="PhosphoSitePlus" id="Q5T440"/>
<dbReference type="SwissPalm" id="Q5T440"/>
<dbReference type="BioMuta" id="IBA57"/>
<dbReference type="DMDM" id="74744873"/>
<dbReference type="jPOST" id="Q5T440"/>
<dbReference type="MassIVE" id="Q5T440"/>
<dbReference type="PaxDb" id="9606-ENSP00000355672"/>
<dbReference type="PeptideAtlas" id="Q5T440"/>
<dbReference type="ProteomicsDB" id="64428"/>
<dbReference type="Pumba" id="Q5T440"/>
<dbReference type="Antibodypedia" id="52265">
    <property type="antibodies" value="74 antibodies from 13 providers"/>
</dbReference>
<dbReference type="DNASU" id="200205"/>
<dbReference type="Ensembl" id="ENST00000366711.4">
    <property type="protein sequence ID" value="ENSP00000355672.3"/>
    <property type="gene ID" value="ENSG00000181873.13"/>
</dbReference>
<dbReference type="GeneID" id="200205"/>
<dbReference type="KEGG" id="hsa:200205"/>
<dbReference type="MANE-Select" id="ENST00000366711.4">
    <property type="protein sequence ID" value="ENSP00000355672.3"/>
    <property type="RefSeq nucleotide sequence ID" value="NM_001010867.4"/>
    <property type="RefSeq protein sequence ID" value="NP_001010867.1"/>
</dbReference>
<dbReference type="UCSC" id="uc001hsl.5">
    <property type="organism name" value="human"/>
</dbReference>
<dbReference type="AGR" id="HGNC:27302"/>
<dbReference type="CTD" id="200205"/>
<dbReference type="DisGeNET" id="200205"/>
<dbReference type="GeneCards" id="IBA57"/>
<dbReference type="HGNC" id="HGNC:27302">
    <property type="gene designation" value="IBA57"/>
</dbReference>
<dbReference type="HPA" id="ENSG00000181873">
    <property type="expression patterns" value="Low tissue specificity"/>
</dbReference>
<dbReference type="MalaCards" id="IBA57"/>
<dbReference type="MIM" id="615316">
    <property type="type" value="gene"/>
</dbReference>
<dbReference type="MIM" id="615330">
    <property type="type" value="phenotype"/>
</dbReference>
<dbReference type="MIM" id="616451">
    <property type="type" value="phenotype"/>
</dbReference>
<dbReference type="neXtProt" id="NX_Q5T440"/>
<dbReference type="OpenTargets" id="ENSG00000181873"/>
<dbReference type="Orphanet" id="468661">
    <property type="disease" value="Autosomal recessive spastic paraplegia type 74"/>
</dbReference>
<dbReference type="Orphanet" id="363424">
    <property type="disease" value="Multiple mitochondrial dysfunctions syndrome type 3"/>
</dbReference>
<dbReference type="PharmGKB" id="PA142672519"/>
<dbReference type="VEuPathDB" id="HostDB:ENSG00000181873"/>
<dbReference type="eggNOG" id="KOG2929">
    <property type="taxonomic scope" value="Eukaryota"/>
</dbReference>
<dbReference type="GeneTree" id="ENSGT00390000006465"/>
<dbReference type="HOGENOM" id="CLU_007884_7_1_1"/>
<dbReference type="InParanoid" id="Q5T440"/>
<dbReference type="OMA" id="MDRLHGV"/>
<dbReference type="OrthoDB" id="191995at2759"/>
<dbReference type="PAN-GO" id="Q5T440">
    <property type="GO annotations" value="2 GO annotations based on evolutionary models"/>
</dbReference>
<dbReference type="PhylomeDB" id="Q5T440"/>
<dbReference type="TreeFam" id="TF105983"/>
<dbReference type="PathwayCommons" id="Q5T440"/>
<dbReference type="SignaLink" id="Q5T440"/>
<dbReference type="BioGRID-ORCS" id="200205">
    <property type="hits" value="177 hits in 1164 CRISPR screens"/>
</dbReference>
<dbReference type="ChiTaRS" id="IBA57">
    <property type="organism name" value="human"/>
</dbReference>
<dbReference type="GenomeRNAi" id="200205"/>
<dbReference type="Pharos" id="Q5T440">
    <property type="development level" value="Tbio"/>
</dbReference>
<dbReference type="PRO" id="PR:Q5T440"/>
<dbReference type="Proteomes" id="UP000005640">
    <property type="component" value="Chromosome 1"/>
</dbReference>
<dbReference type="RNAct" id="Q5T440">
    <property type="molecule type" value="protein"/>
</dbReference>
<dbReference type="Bgee" id="ENSG00000181873">
    <property type="expression patterns" value="Expressed in pancreatic ductal cell and 171 other cell types or tissues"/>
</dbReference>
<dbReference type="GO" id="GO:0005759">
    <property type="term" value="C:mitochondrial matrix"/>
    <property type="evidence" value="ECO:0000318"/>
    <property type="project" value="GO_Central"/>
</dbReference>
<dbReference type="GO" id="GO:0005739">
    <property type="term" value="C:mitochondrion"/>
    <property type="evidence" value="ECO:0000314"/>
    <property type="project" value="HPA"/>
</dbReference>
<dbReference type="GO" id="GO:0003723">
    <property type="term" value="F:RNA binding"/>
    <property type="evidence" value="ECO:0007005"/>
    <property type="project" value="UniProtKB"/>
</dbReference>
<dbReference type="GO" id="GO:0016740">
    <property type="term" value="F:transferase activity"/>
    <property type="evidence" value="ECO:0007669"/>
    <property type="project" value="UniProtKB-KW"/>
</dbReference>
<dbReference type="GO" id="GO:0006783">
    <property type="term" value="P:heme biosynthetic process"/>
    <property type="evidence" value="ECO:0007669"/>
    <property type="project" value="UniProtKB-KW"/>
</dbReference>
<dbReference type="GO" id="GO:0016226">
    <property type="term" value="P:iron-sulfur cluster assembly"/>
    <property type="evidence" value="ECO:0000318"/>
    <property type="project" value="GO_Central"/>
</dbReference>
<dbReference type="FunFam" id="3.30.1360.120:FF:000015">
    <property type="entry name" value="IBA57, iron-sulfur cluster assembly"/>
    <property type="match status" value="1"/>
</dbReference>
<dbReference type="Gene3D" id="3.30.1360.120">
    <property type="entry name" value="Probable tRNA modification gtpase trme, domain 1"/>
    <property type="match status" value="1"/>
</dbReference>
<dbReference type="InterPro" id="IPR027266">
    <property type="entry name" value="TrmE/GcvT_dom1"/>
</dbReference>
<dbReference type="InterPro" id="IPR045179">
    <property type="entry name" value="YgfZ/GcvT"/>
</dbReference>
<dbReference type="InterPro" id="IPR017703">
    <property type="entry name" value="YgfZ/GcvT_CS"/>
</dbReference>
<dbReference type="NCBIfam" id="TIGR03317">
    <property type="entry name" value="ygfZ_signature"/>
    <property type="match status" value="1"/>
</dbReference>
<dbReference type="PANTHER" id="PTHR22602">
    <property type="entry name" value="TRANSFERASE CAF17, MITOCHONDRIAL-RELATED"/>
    <property type="match status" value="1"/>
</dbReference>
<dbReference type="PANTHER" id="PTHR22602:SF0">
    <property type="entry name" value="TRANSFERASE CAF17, MITOCHONDRIAL-RELATED"/>
    <property type="match status" value="1"/>
</dbReference>
<dbReference type="Pfam" id="PF25455">
    <property type="entry name" value="Beta-barrel_CAF17_C"/>
    <property type="match status" value="1"/>
</dbReference>
<dbReference type="SUPFAM" id="SSF103025">
    <property type="entry name" value="Folate-binding domain"/>
    <property type="match status" value="1"/>
</dbReference>
<accession>Q5T440</accession>
<name>CAF17_HUMAN</name>
<feature type="transit peptide" description="Mitochondrion" evidence="2">
    <location>
        <begin position="1"/>
        <end position="39"/>
    </location>
</feature>
<feature type="chain" id="PRO_0000278633" description="Iron-sulfur cluster assembly factor IBA57, mitochondrial">
    <location>
        <begin position="40"/>
        <end position="356"/>
    </location>
</feature>
<feature type="modified residue" description="N6-acetyllysine; alternate" evidence="1">
    <location>
        <position position="309"/>
    </location>
</feature>
<feature type="modified residue" description="N6-succinyllysine; alternate" evidence="1">
    <location>
        <position position="309"/>
    </location>
</feature>
<feature type="sequence variant" id="VAR_030794" description="In dbSNP:rs2298014.">
    <original>G</original>
    <variation>S</variation>
    <location>
        <position position="211"/>
    </location>
</feature>
<feature type="sequence variant" id="VAR_069821" description="In MMDS3; loss of stability and consequently decrease in various mitochondrial 4Fe-4S proteins and in proteins covalently linked to lipoic acid; dbSNP:rs587777016." evidence="4">
    <original>Q</original>
    <variation>P</variation>
    <location>
        <position position="314"/>
    </location>
</feature>
<feature type="mutagenesis site" description="Abolishes interaction with ISCA2." evidence="7">
    <original>R</original>
    <variation>A</variation>
    <location>
        <position position="146"/>
    </location>
</feature>
<feature type="mutagenesis site" description="Abolishes the formation of the [2Fe-2S] ISCA2-IBA57 complex formation." evidence="6">
    <original>C</original>
    <variation>A</variation>
    <location>
        <position position="259"/>
    </location>
</feature>
<feature type="strand" evidence="12">
    <location>
        <begin position="47"/>
        <end position="52"/>
    </location>
</feature>
<feature type="strand" evidence="12">
    <location>
        <begin position="56"/>
        <end position="63"/>
    </location>
</feature>
<feature type="helix" evidence="12">
    <location>
        <begin position="66"/>
        <end position="71"/>
    </location>
</feature>
<feature type="strand" evidence="12">
    <location>
        <begin position="74"/>
        <end position="76"/>
    </location>
</feature>
<feature type="strand" evidence="12">
    <location>
        <begin position="91"/>
        <end position="100"/>
    </location>
</feature>
<feature type="strand" evidence="12">
    <location>
        <begin position="106"/>
        <end position="129"/>
    </location>
</feature>
<feature type="helix" evidence="12">
    <location>
        <begin position="130"/>
        <end position="132"/>
    </location>
</feature>
<feature type="helix" evidence="12">
    <location>
        <begin position="133"/>
        <end position="143"/>
    </location>
</feature>
<feature type="strand" evidence="12">
    <location>
        <begin position="150"/>
        <end position="153"/>
    </location>
</feature>
<feature type="strand" evidence="12">
    <location>
        <begin position="157"/>
        <end position="166"/>
    </location>
</feature>
<feature type="helix" evidence="13">
    <location>
        <begin position="172"/>
        <end position="174"/>
    </location>
</feature>
<feature type="strand" evidence="12">
    <location>
        <begin position="178"/>
        <end position="187"/>
    </location>
</feature>
<feature type="helix" evidence="12">
    <location>
        <begin position="192"/>
        <end position="194"/>
    </location>
</feature>
<feature type="strand" evidence="12">
    <location>
        <begin position="196"/>
        <end position="202"/>
    </location>
</feature>
<feature type="helix" evidence="12">
    <location>
        <begin position="204"/>
        <end position="206"/>
    </location>
</feature>
<feature type="strand" evidence="12">
    <location>
        <begin position="211"/>
        <end position="213"/>
    </location>
</feature>
<feature type="helix" evidence="12">
    <location>
        <begin position="216"/>
        <end position="226"/>
    </location>
</feature>
<feature type="turn" evidence="12">
    <location>
        <begin position="232"/>
        <end position="234"/>
    </location>
</feature>
<feature type="turn" evidence="12">
    <location>
        <begin position="237"/>
        <end position="239"/>
    </location>
</feature>
<feature type="turn" evidence="12">
    <location>
        <begin position="242"/>
        <end position="246"/>
    </location>
</feature>
<feature type="helix" evidence="12">
    <location>
        <begin position="247"/>
        <end position="249"/>
    </location>
</feature>
<feature type="strand" evidence="12">
    <location>
        <begin position="255"/>
        <end position="257"/>
    </location>
</feature>
<feature type="helix" evidence="12">
    <location>
        <begin position="263"/>
        <end position="272"/>
    </location>
</feature>
<feature type="strand" evidence="12">
    <location>
        <begin position="276"/>
        <end position="284"/>
    </location>
</feature>
<feature type="strand" evidence="12">
    <location>
        <begin position="298"/>
        <end position="301"/>
    </location>
</feature>
<feature type="strand" evidence="12">
    <location>
        <begin position="306"/>
        <end position="314"/>
    </location>
</feature>
<feature type="strand" evidence="12">
    <location>
        <begin position="317"/>
        <end position="323"/>
    </location>
</feature>
<feature type="helix" evidence="12">
    <location>
        <begin position="324"/>
        <end position="326"/>
    </location>
</feature>
<feature type="strand" evidence="12">
    <location>
        <begin position="327"/>
        <end position="329"/>
    </location>
</feature>
<feature type="strand" evidence="12">
    <location>
        <begin position="331"/>
        <end position="333"/>
    </location>
</feature>
<feature type="strand" evidence="14">
    <location>
        <begin position="336"/>
        <end position="339"/>
    </location>
</feature>
<feature type="strand" evidence="12">
    <location>
        <begin position="342"/>
        <end position="345"/>
    </location>
</feature>
<keyword id="KW-0002">3D-structure</keyword>
<keyword id="KW-0007">Acetylation</keyword>
<keyword id="KW-0225">Disease variant</keyword>
<keyword id="KW-0350">Heme biosynthesis</keyword>
<keyword id="KW-0890">Hereditary spastic paraplegia</keyword>
<keyword id="KW-0496">Mitochondrion</keyword>
<keyword id="KW-0523">Neurodegeneration</keyword>
<keyword id="KW-1274">Primary mitochondrial disease</keyword>
<keyword id="KW-1267">Proteomics identification</keyword>
<keyword id="KW-1185">Reference proteome</keyword>
<keyword id="KW-0809">Transit peptide</keyword>
<protein>
    <recommendedName>
        <fullName>Iron-sulfur cluster assembly factor IBA57, mitochondrial</fullName>
    </recommendedName>
    <alternativeName>
        <fullName>Iron-sulfur cluster assembly factor homolog</fullName>
    </alternativeName>
</protein>
<organism>
    <name type="scientific">Homo sapiens</name>
    <name type="common">Human</name>
    <dbReference type="NCBI Taxonomy" id="9606"/>
    <lineage>
        <taxon>Eukaryota</taxon>
        <taxon>Metazoa</taxon>
        <taxon>Chordata</taxon>
        <taxon>Craniata</taxon>
        <taxon>Vertebrata</taxon>
        <taxon>Euteleostomi</taxon>
        <taxon>Mammalia</taxon>
        <taxon>Eutheria</taxon>
        <taxon>Euarchontoglires</taxon>
        <taxon>Primates</taxon>
        <taxon>Haplorrhini</taxon>
        <taxon>Catarrhini</taxon>
        <taxon>Hominidae</taxon>
        <taxon>Homo</taxon>
    </lineage>
</organism>